<dbReference type="EC" id="1.9.6.1" evidence="2 5"/>
<dbReference type="EMBL" id="U00008">
    <property type="protein sequence ID" value="AAA16399.1"/>
    <property type="status" value="ALT_FRAME"/>
    <property type="molecule type" value="Genomic_DNA"/>
</dbReference>
<dbReference type="EMBL" id="U00096">
    <property type="protein sequence ID" value="AAC75266.1"/>
    <property type="molecule type" value="Genomic_DNA"/>
</dbReference>
<dbReference type="EMBL" id="AP009048">
    <property type="protein sequence ID" value="BAA15989.2"/>
    <property type="molecule type" value="Genomic_DNA"/>
</dbReference>
<dbReference type="PIR" id="D64990">
    <property type="entry name" value="D64990"/>
</dbReference>
<dbReference type="RefSeq" id="NP_416710.1">
    <property type="nucleotide sequence ID" value="NC_000913.3"/>
</dbReference>
<dbReference type="RefSeq" id="WP_000778061.1">
    <property type="nucleotide sequence ID" value="NZ_SSZK01000027.1"/>
</dbReference>
<dbReference type="PDB" id="2NYA">
    <property type="method" value="X-ray"/>
    <property type="resolution" value="2.50 A"/>
    <property type="chains" value="A/F=37-828"/>
</dbReference>
<dbReference type="PDB" id="2PQ4">
    <property type="method" value="NMR"/>
    <property type="chains" value="B=1-35"/>
</dbReference>
<dbReference type="PDBsum" id="2NYA"/>
<dbReference type="PDBsum" id="2PQ4"/>
<dbReference type="SMR" id="P33937"/>
<dbReference type="BioGRID" id="4262221">
    <property type="interactions" value="166"/>
</dbReference>
<dbReference type="BioGRID" id="851429">
    <property type="interactions" value="1"/>
</dbReference>
<dbReference type="ComplexPortal" id="CPX-3447">
    <property type="entry name" value="NapAB nitrate reductase complex"/>
</dbReference>
<dbReference type="DIP" id="DIP-10304N"/>
<dbReference type="FunCoup" id="P33937">
    <property type="interactions" value="136"/>
</dbReference>
<dbReference type="IntAct" id="P33937">
    <property type="interactions" value="14"/>
</dbReference>
<dbReference type="MINT" id="P33937"/>
<dbReference type="STRING" id="511145.b2206"/>
<dbReference type="TCDB" id="3.D.11.1.1">
    <property type="family name" value="the periplasmic nitrate reductase complex (nap) complex family"/>
</dbReference>
<dbReference type="jPOST" id="P33937"/>
<dbReference type="PaxDb" id="511145-b2206"/>
<dbReference type="EnsemblBacteria" id="AAC75266">
    <property type="protein sequence ID" value="AAC75266"/>
    <property type="gene ID" value="b2206"/>
</dbReference>
<dbReference type="GeneID" id="947093"/>
<dbReference type="KEGG" id="ecj:JW2194"/>
<dbReference type="KEGG" id="eco:b2206"/>
<dbReference type="KEGG" id="ecoc:C3026_12325"/>
<dbReference type="PATRIC" id="fig|1411691.4.peg.30"/>
<dbReference type="EchoBASE" id="EB1994"/>
<dbReference type="eggNOG" id="COG0243">
    <property type="taxonomic scope" value="Bacteria"/>
</dbReference>
<dbReference type="HOGENOM" id="CLU_000422_13_4_6"/>
<dbReference type="InParanoid" id="P33937"/>
<dbReference type="OMA" id="GMNAHQH"/>
<dbReference type="OrthoDB" id="9816402at2"/>
<dbReference type="PhylomeDB" id="P33937"/>
<dbReference type="BioCyc" id="EcoCyc:NAPA-MONOMER"/>
<dbReference type="BioCyc" id="MetaCyc:NAPA-MONOMER"/>
<dbReference type="BRENDA" id="1.9.6.1">
    <property type="organism ID" value="2026"/>
</dbReference>
<dbReference type="EvolutionaryTrace" id="P33937"/>
<dbReference type="PHI-base" id="PHI:10522"/>
<dbReference type="PRO" id="PR:P33937"/>
<dbReference type="Proteomes" id="UP000000625">
    <property type="component" value="Chromosome"/>
</dbReference>
<dbReference type="GO" id="GO:0016020">
    <property type="term" value="C:membrane"/>
    <property type="evidence" value="ECO:0000318"/>
    <property type="project" value="GO_Central"/>
</dbReference>
<dbReference type="GO" id="GO:0009325">
    <property type="term" value="C:nitrate reductase complex"/>
    <property type="evidence" value="ECO:0000353"/>
    <property type="project" value="ComplexPortal"/>
</dbReference>
<dbReference type="GO" id="GO:0030288">
    <property type="term" value="C:outer membrane-bounded periplasmic space"/>
    <property type="evidence" value="ECO:0000314"/>
    <property type="project" value="CACAO"/>
</dbReference>
<dbReference type="GO" id="GO:0042597">
    <property type="term" value="C:periplasmic space"/>
    <property type="evidence" value="ECO:0000314"/>
    <property type="project" value="ComplexPortal"/>
</dbReference>
<dbReference type="GO" id="GO:0051539">
    <property type="term" value="F:4 iron, 4 sulfur cluster binding"/>
    <property type="evidence" value="ECO:0000314"/>
    <property type="project" value="EcoCyc"/>
</dbReference>
<dbReference type="GO" id="GO:0009055">
    <property type="term" value="F:electron transfer activity"/>
    <property type="evidence" value="ECO:0007669"/>
    <property type="project" value="UniProtKB-UniRule"/>
</dbReference>
<dbReference type="GO" id="GO:0005506">
    <property type="term" value="F:iron ion binding"/>
    <property type="evidence" value="ECO:0007669"/>
    <property type="project" value="UniProtKB-UniRule"/>
</dbReference>
<dbReference type="GO" id="GO:0030151">
    <property type="term" value="F:molybdenum ion binding"/>
    <property type="evidence" value="ECO:0000314"/>
    <property type="project" value="EcoCyc"/>
</dbReference>
<dbReference type="GO" id="GO:0043546">
    <property type="term" value="F:molybdopterin cofactor binding"/>
    <property type="evidence" value="ECO:0007669"/>
    <property type="project" value="InterPro"/>
</dbReference>
<dbReference type="GO" id="GO:0050140">
    <property type="term" value="F:nitrate reductase (cytochrome) activity"/>
    <property type="evidence" value="ECO:0007669"/>
    <property type="project" value="UniProtKB-EC"/>
</dbReference>
<dbReference type="GO" id="GO:0008940">
    <property type="term" value="F:nitrate reductase activity"/>
    <property type="evidence" value="ECO:0000314"/>
    <property type="project" value="CACAO"/>
</dbReference>
<dbReference type="GO" id="GO:0009061">
    <property type="term" value="P:anaerobic respiration"/>
    <property type="evidence" value="ECO:0000316"/>
    <property type="project" value="EcoliWiki"/>
</dbReference>
<dbReference type="GO" id="GO:0006777">
    <property type="term" value="P:Mo-molybdopterin cofactor biosynthetic process"/>
    <property type="evidence" value="ECO:0007669"/>
    <property type="project" value="UniProtKB-UniRule"/>
</dbReference>
<dbReference type="GO" id="GO:0042128">
    <property type="term" value="P:nitrate assimilation"/>
    <property type="evidence" value="ECO:0000303"/>
    <property type="project" value="ComplexPortal"/>
</dbReference>
<dbReference type="CDD" id="cd02791">
    <property type="entry name" value="MopB_CT_Nitrate-R-NapA-like"/>
    <property type="match status" value="1"/>
</dbReference>
<dbReference type="CDD" id="cd02754">
    <property type="entry name" value="MopB_Nitrate-R-NapA-like"/>
    <property type="match status" value="1"/>
</dbReference>
<dbReference type="FunFam" id="2.40.40.20:FF:000005">
    <property type="entry name" value="Periplasmic nitrate reductase"/>
    <property type="match status" value="1"/>
</dbReference>
<dbReference type="FunFam" id="3.40.228.10:FF:000001">
    <property type="entry name" value="Periplasmic nitrate reductase"/>
    <property type="match status" value="1"/>
</dbReference>
<dbReference type="Gene3D" id="2.40.40.20">
    <property type="match status" value="1"/>
</dbReference>
<dbReference type="Gene3D" id="3.30.200.210">
    <property type="match status" value="1"/>
</dbReference>
<dbReference type="Gene3D" id="3.40.50.740">
    <property type="match status" value="1"/>
</dbReference>
<dbReference type="Gene3D" id="3.40.228.10">
    <property type="entry name" value="Dimethylsulfoxide Reductase, domain 2"/>
    <property type="match status" value="1"/>
</dbReference>
<dbReference type="HAMAP" id="MF_01630">
    <property type="entry name" value="Nitrate_reduct_NapA"/>
    <property type="match status" value="1"/>
</dbReference>
<dbReference type="InterPro" id="IPR009010">
    <property type="entry name" value="Asp_de-COase-like_dom_sf"/>
</dbReference>
<dbReference type="InterPro" id="IPR041957">
    <property type="entry name" value="CT_Nitrate-R-NapA-like"/>
</dbReference>
<dbReference type="InterPro" id="IPR006657">
    <property type="entry name" value="MoPterin_dinucl-bd_dom"/>
</dbReference>
<dbReference type="InterPro" id="IPR006656">
    <property type="entry name" value="Mopterin_OxRdtase"/>
</dbReference>
<dbReference type="InterPro" id="IPR006963">
    <property type="entry name" value="Mopterin_OxRdtase_4Fe-4S_dom"/>
</dbReference>
<dbReference type="InterPro" id="IPR027467">
    <property type="entry name" value="MopterinOxRdtase_cofactor_BS"/>
</dbReference>
<dbReference type="InterPro" id="IPR010051">
    <property type="entry name" value="Periplasm_NO3_reductase_lsu"/>
</dbReference>
<dbReference type="InterPro" id="IPR050123">
    <property type="entry name" value="Prok_molybdopt-oxidoreductase"/>
</dbReference>
<dbReference type="InterPro" id="IPR006311">
    <property type="entry name" value="TAT_signal"/>
</dbReference>
<dbReference type="InterPro" id="IPR019546">
    <property type="entry name" value="TAT_signal_bac_arc"/>
</dbReference>
<dbReference type="NCBIfam" id="TIGR01706">
    <property type="entry name" value="NAPA"/>
    <property type="match status" value="1"/>
</dbReference>
<dbReference type="NCBIfam" id="NF010055">
    <property type="entry name" value="PRK13532.1"/>
    <property type="match status" value="1"/>
</dbReference>
<dbReference type="NCBIfam" id="TIGR01409">
    <property type="entry name" value="TAT_signal_seq"/>
    <property type="match status" value="1"/>
</dbReference>
<dbReference type="PANTHER" id="PTHR43105:SF11">
    <property type="entry name" value="PERIPLASMIC NITRATE REDUCTASE"/>
    <property type="match status" value="1"/>
</dbReference>
<dbReference type="PANTHER" id="PTHR43105">
    <property type="entry name" value="RESPIRATORY NITRATE REDUCTASE"/>
    <property type="match status" value="1"/>
</dbReference>
<dbReference type="Pfam" id="PF04879">
    <property type="entry name" value="Molybdop_Fe4S4"/>
    <property type="match status" value="1"/>
</dbReference>
<dbReference type="Pfam" id="PF00384">
    <property type="entry name" value="Molybdopterin"/>
    <property type="match status" value="1"/>
</dbReference>
<dbReference type="Pfam" id="PF01568">
    <property type="entry name" value="Molydop_binding"/>
    <property type="match status" value="1"/>
</dbReference>
<dbReference type="SMART" id="SM00926">
    <property type="entry name" value="Molybdop_Fe4S4"/>
    <property type="match status" value="1"/>
</dbReference>
<dbReference type="SUPFAM" id="SSF50692">
    <property type="entry name" value="ADC-like"/>
    <property type="match status" value="1"/>
</dbReference>
<dbReference type="SUPFAM" id="SSF53706">
    <property type="entry name" value="Formate dehydrogenase/DMSO reductase, domains 1-3"/>
    <property type="match status" value="1"/>
</dbReference>
<dbReference type="PROSITE" id="PS51669">
    <property type="entry name" value="4FE4S_MOW_BIS_MGD"/>
    <property type="match status" value="1"/>
</dbReference>
<dbReference type="PROSITE" id="PS00551">
    <property type="entry name" value="MOLYBDOPTERIN_PROK_1"/>
    <property type="match status" value="1"/>
</dbReference>
<dbReference type="PROSITE" id="PS51318">
    <property type="entry name" value="TAT"/>
    <property type="match status" value="1"/>
</dbReference>
<proteinExistence type="evidence at protein level"/>
<organism>
    <name type="scientific">Escherichia coli (strain K12)</name>
    <dbReference type="NCBI Taxonomy" id="83333"/>
    <lineage>
        <taxon>Bacteria</taxon>
        <taxon>Pseudomonadati</taxon>
        <taxon>Pseudomonadota</taxon>
        <taxon>Gammaproteobacteria</taxon>
        <taxon>Enterobacterales</taxon>
        <taxon>Enterobacteriaceae</taxon>
        <taxon>Escherichia</taxon>
    </lineage>
</organism>
<accession>P33937</accession>
<accession>P78087</accession>
<keyword id="KW-0002">3D-structure</keyword>
<keyword id="KW-0004">4Fe-4S</keyword>
<keyword id="KW-0903">Direct protein sequencing</keyword>
<keyword id="KW-0249">Electron transport</keyword>
<keyword id="KW-0408">Iron</keyword>
<keyword id="KW-0411">Iron-sulfur</keyword>
<keyword id="KW-0479">Metal-binding</keyword>
<keyword id="KW-0500">Molybdenum</keyword>
<keyword id="KW-0534">Nitrate assimilation</keyword>
<keyword id="KW-0560">Oxidoreductase</keyword>
<keyword id="KW-0574">Periplasm</keyword>
<keyword id="KW-1185">Reference proteome</keyword>
<keyword id="KW-0732">Signal</keyword>
<keyword id="KW-0813">Transport</keyword>
<comment type="function">
    <text evidence="2 5">Catalytic subunit of the periplasmic nitrate reductase complex NapAB. Receives electrons from NapB and catalyzes the reduction of nitrate to nitrite.</text>
</comment>
<comment type="catalytic activity">
    <reaction evidence="2 5">
        <text>2 Fe(II)-[cytochrome] + nitrate + 2 H(+) = 2 Fe(III)-[cytochrome] + nitrite + H2O</text>
        <dbReference type="Rhea" id="RHEA:12909"/>
        <dbReference type="Rhea" id="RHEA-COMP:11777"/>
        <dbReference type="Rhea" id="RHEA-COMP:11778"/>
        <dbReference type="ChEBI" id="CHEBI:15377"/>
        <dbReference type="ChEBI" id="CHEBI:15378"/>
        <dbReference type="ChEBI" id="CHEBI:16301"/>
        <dbReference type="ChEBI" id="CHEBI:17632"/>
        <dbReference type="ChEBI" id="CHEBI:29033"/>
        <dbReference type="ChEBI" id="CHEBI:29034"/>
        <dbReference type="EC" id="1.9.6.1"/>
    </reaction>
</comment>
<comment type="cofactor">
    <cofactor evidence="2 5">
        <name>[4Fe-4S] cluster</name>
        <dbReference type="ChEBI" id="CHEBI:49883"/>
    </cofactor>
    <text evidence="2 5">Binds 1 [4Fe-4S] cluster.</text>
</comment>
<comment type="cofactor">
    <cofactor evidence="2 5">
        <name>Mo-bis(molybdopterin guanine dinucleotide)</name>
        <dbReference type="ChEBI" id="CHEBI:60539"/>
    </cofactor>
    <text evidence="2 5">Binds 1 molybdenum-bis(molybdopterin guanine dinucleotide) (Mo-bis-MGD) cofactor per subunit.</text>
</comment>
<comment type="activity regulation">
    <text evidence="7">Interaction in the cytoplasm with the NapD chaperone prevents premature export.</text>
</comment>
<comment type="subunit">
    <text evidence="3 4 5 7 8 9 10">Component of the periplasmic nitrate reductase NapAB complex composed of NapA and NapB (PubMed:10234835, PubMed:17130127). Before export to the periplasm, the NapA twin-arginine signal sequence interacts with NapD and NapF (PubMed:17074894, PubMed:17901208, PubMed:22329966, PubMed:24314029, Ref.13).</text>
</comment>
<comment type="interaction">
    <interactant intactId="EBI-554952">
        <id>P33937</id>
    </interactant>
    <interactant intactId="EBI-17171907">
        <id>P0ABL3</id>
        <label>napB</label>
    </interactant>
    <organismsDiffer>false</organismsDiffer>
    <experiments>2</experiments>
</comment>
<comment type="interaction">
    <interactant intactId="EBI-554952">
        <id>P33937</id>
    </interactant>
    <interactant intactId="EBI-554985">
        <id>P0A9I5</id>
        <label>napD</label>
    </interactant>
    <organismsDiffer>false</organismsDiffer>
    <experiments>11</experiments>
</comment>
<comment type="subcellular location">
    <subcellularLocation>
        <location evidence="2 3">Periplasm</location>
    </subcellularLocation>
</comment>
<comment type="domain">
    <text evidence="9">The twin-arginine signal peptide of NapA is structured in its unbound form and undergoes a small but significant conformational change upon interaction with NapD.</text>
</comment>
<comment type="PTM">
    <text evidence="3 6">Exported by the Tat system (PubMed:17218314). The position of the signal peptide cleavage has been experimentally proven (PubMed:10234835).</text>
</comment>
<comment type="similarity">
    <text evidence="2 11">Belongs to the prokaryotic molybdopterin-containing oxidoreductase family. NasA/NapA/NarB subfamily.</text>
</comment>
<comment type="sequence caution" evidence="11">
    <conflict type="frameshift">
        <sequence resource="EMBL-CDS" id="AAA16399"/>
    </conflict>
</comment>
<feature type="signal peptide" description="Tat-type signal" evidence="3">
    <location>
        <begin position="1"/>
        <end position="36"/>
    </location>
</feature>
<feature type="chain" id="PRO_0000019170" description="Periplasmic nitrate reductase">
    <location>
        <begin position="37"/>
        <end position="828"/>
    </location>
</feature>
<feature type="domain" description="4Fe-4S Mo/W bis-MGD-type" evidence="2">
    <location>
        <begin position="39"/>
        <end position="95"/>
    </location>
</feature>
<feature type="binding site" evidence="2 5 12">
    <location>
        <position position="46"/>
    </location>
    <ligand>
        <name>[4Fe-4S] cluster</name>
        <dbReference type="ChEBI" id="CHEBI:49883"/>
    </ligand>
</feature>
<feature type="binding site" evidence="2 5 12">
    <location>
        <position position="49"/>
    </location>
    <ligand>
        <name>[4Fe-4S] cluster</name>
        <dbReference type="ChEBI" id="CHEBI:49883"/>
    </ligand>
</feature>
<feature type="binding site" evidence="2 5 12">
    <location>
        <position position="53"/>
    </location>
    <ligand>
        <name>[4Fe-4S] cluster</name>
        <dbReference type="ChEBI" id="CHEBI:49883"/>
    </ligand>
</feature>
<feature type="binding site" evidence="2 5 12">
    <location>
        <position position="81"/>
    </location>
    <ligand>
        <name>[4Fe-4S] cluster</name>
        <dbReference type="ChEBI" id="CHEBI:49883"/>
    </ligand>
</feature>
<feature type="binding site" evidence="2 5 12">
    <location>
        <position position="83"/>
    </location>
    <ligand>
        <name>Mo-bis(molybdopterin guanine dinucleotide)</name>
        <dbReference type="ChEBI" id="CHEBI:60539"/>
    </ligand>
</feature>
<feature type="binding site" evidence="2 5 12">
    <location>
        <position position="150"/>
    </location>
    <ligand>
        <name>Mo-bis(molybdopterin guanine dinucleotide)</name>
        <dbReference type="ChEBI" id="CHEBI:60539"/>
    </ligand>
</feature>
<feature type="binding site" evidence="2 5 12">
    <location>
        <position position="175"/>
    </location>
    <ligand>
        <name>Mo-bis(molybdopterin guanine dinucleotide)</name>
        <dbReference type="ChEBI" id="CHEBI:60539"/>
    </ligand>
</feature>
<feature type="binding site" evidence="2 5 12">
    <location>
        <position position="179"/>
    </location>
    <ligand>
        <name>Mo-bis(molybdopterin guanine dinucleotide)</name>
        <dbReference type="ChEBI" id="CHEBI:60539"/>
    </ligand>
</feature>
<feature type="binding site" evidence="2 5 12">
    <location>
        <begin position="212"/>
        <end position="219"/>
    </location>
    <ligand>
        <name>Mo-bis(molybdopterin guanine dinucleotide)</name>
        <dbReference type="ChEBI" id="CHEBI:60539"/>
    </ligand>
</feature>
<feature type="binding site" evidence="2 5 12">
    <location>
        <begin position="243"/>
        <end position="247"/>
    </location>
    <ligand>
        <name>Mo-bis(molybdopterin guanine dinucleotide)</name>
        <dbReference type="ChEBI" id="CHEBI:60539"/>
    </ligand>
</feature>
<feature type="binding site" evidence="2 5 12">
    <location>
        <begin position="262"/>
        <end position="264"/>
    </location>
    <ligand>
        <name>Mo-bis(molybdopterin guanine dinucleotide)</name>
        <dbReference type="ChEBI" id="CHEBI:60539"/>
    </ligand>
</feature>
<feature type="binding site" evidence="2 5 12">
    <location>
        <position position="372"/>
    </location>
    <ligand>
        <name>Mo-bis(molybdopterin guanine dinucleotide)</name>
        <dbReference type="ChEBI" id="CHEBI:60539"/>
    </ligand>
</feature>
<feature type="binding site" evidence="2 5 12">
    <location>
        <position position="376"/>
    </location>
    <ligand>
        <name>Mo-bis(molybdopterin guanine dinucleotide)</name>
        <dbReference type="ChEBI" id="CHEBI:60539"/>
    </ligand>
</feature>
<feature type="binding site" evidence="2 5 12">
    <location>
        <position position="482"/>
    </location>
    <ligand>
        <name>Mo-bis(molybdopterin guanine dinucleotide)</name>
        <dbReference type="ChEBI" id="CHEBI:60539"/>
    </ligand>
</feature>
<feature type="binding site" evidence="2 5 12">
    <location>
        <begin position="508"/>
        <end position="509"/>
    </location>
    <ligand>
        <name>Mo-bis(molybdopterin guanine dinucleotide)</name>
        <dbReference type="ChEBI" id="CHEBI:60539"/>
    </ligand>
</feature>
<feature type="binding site" evidence="2 5 12">
    <location>
        <position position="531"/>
    </location>
    <ligand>
        <name>Mo-bis(molybdopterin guanine dinucleotide)</name>
        <dbReference type="ChEBI" id="CHEBI:60539"/>
    </ligand>
</feature>
<feature type="binding site" evidence="2 5 12">
    <location>
        <position position="558"/>
    </location>
    <ligand>
        <name>Mo-bis(molybdopterin guanine dinucleotide)</name>
        <dbReference type="ChEBI" id="CHEBI:60539"/>
    </ligand>
</feature>
<feature type="binding site" evidence="2 5 12">
    <location>
        <begin position="718"/>
        <end position="727"/>
    </location>
    <ligand>
        <name>Mo-bis(molybdopterin guanine dinucleotide)</name>
        <dbReference type="ChEBI" id="CHEBI:60539"/>
    </ligand>
</feature>
<feature type="binding site" evidence="1 2">
    <location>
        <position position="794"/>
    </location>
    <ligand>
        <name>substrate</name>
    </ligand>
</feature>
<feature type="binding site" evidence="2 5 12">
    <location>
        <position position="802"/>
    </location>
    <ligand>
        <name>Mo-bis(molybdopterin guanine dinucleotide)</name>
        <dbReference type="ChEBI" id="CHEBI:60539"/>
    </ligand>
</feature>
<feature type="binding site" evidence="2 5 12">
    <location>
        <position position="819"/>
    </location>
    <ligand>
        <name>Mo-bis(molybdopterin guanine dinucleotide)</name>
        <dbReference type="ChEBI" id="CHEBI:60539"/>
    </ligand>
</feature>
<feature type="mutagenesis site" description="Impairs interaction with NapD. Lack of nitrate reductase activity. Tat transport is blocked." evidence="8">
    <original>R</original>
    <variation>Q</variation>
    <location>
        <position position="6"/>
    </location>
</feature>
<feature type="mutagenesis site" description="Impairs interaction with NapD. Slight decrease in nitrate reductase activity. Minor defect in Tat transport." evidence="8">
    <original>K</original>
    <variation>Q</variation>
    <location>
        <position position="10"/>
    </location>
</feature>
<feature type="mutagenesis site" description="Impairs interaction with NapD." evidence="8">
    <original>A</original>
    <variation>L</variation>
    <location>
        <position position="17"/>
    </location>
</feature>
<feature type="mutagenesis site" description="Impairs interaction with NapD. Decrease in nitrate reductase activity. Defect in Tat transport." evidence="8">
    <original>A</original>
    <variation>Q</variation>
    <location>
        <position position="17"/>
    </location>
</feature>
<feature type="sequence conflict" description="In Ref. 1; AAA16399." evidence="11" ref="1">
    <original>T</original>
    <variation>R</variation>
    <location>
        <position position="98"/>
    </location>
</feature>
<feature type="helix" evidence="14">
    <location>
        <begin position="6"/>
        <end position="21"/>
    </location>
</feature>
<feature type="strand" evidence="14">
    <location>
        <begin position="26"/>
        <end position="29"/>
    </location>
</feature>
<feature type="strand" evidence="13">
    <location>
        <begin position="40"/>
        <end position="45"/>
    </location>
</feature>
<feature type="strand" evidence="13">
    <location>
        <begin position="47"/>
        <end position="49"/>
    </location>
</feature>
<feature type="strand" evidence="13">
    <location>
        <begin position="54"/>
        <end position="60"/>
    </location>
</feature>
<feature type="strand" evidence="13">
    <location>
        <begin position="63"/>
        <end position="69"/>
    </location>
</feature>
<feature type="turn" evidence="13">
    <location>
        <begin position="74"/>
        <end position="78"/>
    </location>
</feature>
<feature type="helix" evidence="13">
    <location>
        <begin position="82"/>
        <end position="85"/>
    </location>
</feature>
<feature type="helix" evidence="13">
    <location>
        <begin position="86"/>
        <end position="89"/>
    </location>
</feature>
<feature type="strand" evidence="13">
    <location>
        <begin position="101"/>
        <end position="109"/>
    </location>
</feature>
<feature type="strand" evidence="13">
    <location>
        <begin position="114"/>
        <end position="117"/>
    </location>
</feature>
<feature type="helix" evidence="13">
    <location>
        <begin position="120"/>
        <end position="137"/>
    </location>
</feature>
<feature type="helix" evidence="13">
    <location>
        <begin position="140"/>
        <end position="142"/>
    </location>
</feature>
<feature type="strand" evidence="13">
    <location>
        <begin position="143"/>
        <end position="147"/>
    </location>
</feature>
<feature type="helix" evidence="13">
    <location>
        <begin position="153"/>
        <end position="164"/>
    </location>
</feature>
<feature type="turn" evidence="13">
    <location>
        <begin position="165"/>
        <end position="167"/>
    </location>
</feature>
<feature type="strand" evidence="13">
    <location>
        <begin position="172"/>
        <end position="174"/>
    </location>
</feature>
<feature type="helix" evidence="13">
    <location>
        <begin position="175"/>
        <end position="177"/>
    </location>
</feature>
<feature type="turn" evidence="13">
    <location>
        <begin position="178"/>
        <end position="180"/>
    </location>
</feature>
<feature type="helix" evidence="13">
    <location>
        <begin position="181"/>
        <end position="190"/>
    </location>
</feature>
<feature type="helix" evidence="13">
    <location>
        <begin position="200"/>
        <end position="205"/>
    </location>
</feature>
<feature type="strand" evidence="13">
    <location>
        <begin position="207"/>
        <end position="213"/>
    </location>
</feature>
<feature type="helix" evidence="13">
    <location>
        <begin position="216"/>
        <end position="219"/>
    </location>
</feature>
<feature type="helix" evidence="13">
    <location>
        <begin position="221"/>
        <end position="232"/>
    </location>
</feature>
<feature type="strand" evidence="13">
    <location>
        <begin position="238"/>
        <end position="246"/>
    </location>
</feature>
<feature type="helix" evidence="13">
    <location>
        <begin position="248"/>
        <end position="252"/>
    </location>
</feature>
<feature type="strand" evidence="13">
    <location>
        <begin position="254"/>
        <end position="258"/>
    </location>
</feature>
<feature type="turn" evidence="13">
    <location>
        <begin position="261"/>
        <end position="263"/>
    </location>
</feature>
<feature type="helix" evidence="13">
    <location>
        <begin position="264"/>
        <end position="277"/>
    </location>
</feature>
<feature type="helix" evidence="13">
    <location>
        <begin position="283"/>
        <end position="289"/>
    </location>
</feature>
<feature type="strand" evidence="13">
    <location>
        <begin position="290"/>
        <end position="295"/>
    </location>
</feature>
<feature type="helix" evidence="13">
    <location>
        <begin position="308"/>
        <end position="311"/>
    </location>
</feature>
<feature type="strand" evidence="13">
    <location>
        <begin position="321"/>
        <end position="323"/>
    </location>
</feature>
<feature type="helix" evidence="13">
    <location>
        <begin position="326"/>
        <end position="334"/>
    </location>
</feature>
<feature type="helix" evidence="13">
    <location>
        <begin position="338"/>
        <end position="345"/>
    </location>
</feature>
<feature type="helix" evidence="13">
    <location>
        <begin position="349"/>
        <end position="360"/>
    </location>
</feature>
<feature type="strand" evidence="13">
    <location>
        <begin position="366"/>
        <end position="371"/>
    </location>
</feature>
<feature type="helix" evidence="13">
    <location>
        <begin position="372"/>
        <end position="375"/>
    </location>
</feature>
<feature type="helix" evidence="13">
    <location>
        <begin position="380"/>
        <end position="394"/>
    </location>
</feature>
<feature type="strand" evidence="13">
    <location>
        <begin position="402"/>
        <end position="406"/>
    </location>
</feature>
<feature type="turn" evidence="13">
    <location>
        <begin position="411"/>
        <end position="416"/>
    </location>
</feature>
<feature type="helix" evidence="13">
    <location>
        <begin position="417"/>
        <end position="420"/>
    </location>
</feature>
<feature type="helix" evidence="13">
    <location>
        <begin position="436"/>
        <end position="446"/>
    </location>
</feature>
<feature type="helix" evidence="13">
    <location>
        <begin position="461"/>
        <end position="469"/>
    </location>
</feature>
<feature type="strand" evidence="13">
    <location>
        <begin position="475"/>
        <end position="480"/>
    </location>
</feature>
<feature type="helix" evidence="13">
    <location>
        <begin position="483"/>
        <end position="486"/>
    </location>
</feature>
<feature type="turn" evidence="13">
    <location>
        <begin position="490"/>
        <end position="493"/>
    </location>
</feature>
<feature type="helix" evidence="13">
    <location>
        <begin position="494"/>
        <end position="499"/>
    </location>
</feature>
<feature type="strand" evidence="13">
    <location>
        <begin position="504"/>
        <end position="511"/>
    </location>
</feature>
<feature type="helix" evidence="13">
    <location>
        <begin position="514"/>
        <end position="517"/>
    </location>
</feature>
<feature type="strand" evidence="13">
    <location>
        <begin position="519"/>
        <end position="525"/>
    </location>
</feature>
<feature type="helix" evidence="13">
    <location>
        <begin position="528"/>
        <end position="530"/>
    </location>
</feature>
<feature type="strand" evidence="13">
    <location>
        <begin position="533"/>
        <end position="536"/>
    </location>
</feature>
<feature type="strand" evidence="13">
    <location>
        <begin position="540"/>
        <end position="545"/>
    </location>
</feature>
<feature type="helix" evidence="13">
    <location>
        <begin position="558"/>
        <end position="565"/>
    </location>
</feature>
<feature type="helix" evidence="13">
    <location>
        <begin position="566"/>
        <end position="568"/>
    </location>
</feature>
<feature type="helix" evidence="13">
    <location>
        <begin position="571"/>
        <end position="574"/>
    </location>
</feature>
<feature type="helix" evidence="13">
    <location>
        <begin position="577"/>
        <end position="580"/>
    </location>
</feature>
<feature type="helix" evidence="13">
    <location>
        <begin position="584"/>
        <end position="586"/>
    </location>
</feature>
<feature type="helix" evidence="13">
    <location>
        <begin position="591"/>
        <end position="595"/>
    </location>
</feature>
<feature type="turn" evidence="13">
    <location>
        <begin position="599"/>
        <end position="602"/>
    </location>
</feature>
<feature type="helix" evidence="13">
    <location>
        <begin position="606"/>
        <end position="608"/>
    </location>
</feature>
<feature type="helix" evidence="13">
    <location>
        <begin position="616"/>
        <end position="621"/>
    </location>
</feature>
<feature type="helix" evidence="13">
    <location>
        <begin position="625"/>
        <end position="637"/>
    </location>
</feature>
<feature type="turn" evidence="13">
    <location>
        <begin position="638"/>
        <end position="641"/>
    </location>
</feature>
<feature type="helix" evidence="13">
    <location>
        <begin position="647"/>
        <end position="650"/>
    </location>
</feature>
<feature type="strand" evidence="13">
    <location>
        <begin position="656"/>
        <end position="658"/>
    </location>
</feature>
<feature type="strand" evidence="13">
    <location>
        <begin position="667"/>
        <end position="671"/>
    </location>
</feature>
<feature type="turn" evidence="13">
    <location>
        <begin position="672"/>
        <end position="674"/>
    </location>
</feature>
<feature type="strand" evidence="13">
    <location>
        <begin position="694"/>
        <end position="698"/>
    </location>
</feature>
<feature type="strand" evidence="13">
    <location>
        <begin position="710"/>
        <end position="712"/>
    </location>
</feature>
<feature type="strand" evidence="13">
    <location>
        <begin position="714"/>
        <end position="719"/>
    </location>
</feature>
<feature type="helix" evidence="13">
    <location>
        <begin position="731"/>
        <end position="733"/>
    </location>
</feature>
<feature type="helix" evidence="13">
    <location>
        <begin position="735"/>
        <end position="738"/>
    </location>
</feature>
<feature type="strand" evidence="13">
    <location>
        <begin position="745"/>
        <end position="747"/>
    </location>
</feature>
<feature type="helix" evidence="13">
    <location>
        <begin position="750"/>
        <end position="754"/>
    </location>
</feature>
<feature type="turn" evidence="13">
    <location>
        <begin position="755"/>
        <end position="757"/>
    </location>
</feature>
<feature type="strand" evidence="13">
    <location>
        <begin position="763"/>
        <end position="768"/>
    </location>
</feature>
<feature type="strand" evidence="13">
    <location>
        <begin position="771"/>
        <end position="782"/>
    </location>
</feature>
<feature type="strand" evidence="13">
    <location>
        <begin position="789"/>
        <end position="793"/>
    </location>
</feature>
<feature type="helix" evidence="13">
    <location>
        <begin position="801"/>
        <end position="803"/>
    </location>
</feature>
<feature type="turn" evidence="13">
    <location>
        <begin position="811"/>
        <end position="813"/>
    </location>
</feature>
<feature type="strand" evidence="13">
    <location>
        <begin position="821"/>
        <end position="826"/>
    </location>
</feature>
<reference key="1">
    <citation type="submission" date="1993-10" db="EMBL/GenBank/DDBJ databases">
        <title>Automated multiplex sequencing of the E.coli genome.</title>
        <authorList>
            <person name="Richterich P."/>
            <person name="Lakey N."/>
            <person name="Gryan G."/>
            <person name="Jaehn L."/>
            <person name="Mintz L."/>
            <person name="Robison K."/>
            <person name="Church G.M."/>
        </authorList>
    </citation>
    <scope>NUCLEOTIDE SEQUENCE [LARGE SCALE GENOMIC DNA]</scope>
    <source>
        <strain>K12 / BHB2600</strain>
    </source>
</reference>
<reference key="2">
    <citation type="submission" date="1994-02" db="EMBL/GenBank/DDBJ databases">
        <authorList>
            <person name="Robison K."/>
        </authorList>
    </citation>
    <scope>SEQUENCE REVISION</scope>
</reference>
<reference key="3">
    <citation type="journal article" date="1997" name="Science">
        <title>The complete genome sequence of Escherichia coli K-12.</title>
        <authorList>
            <person name="Blattner F.R."/>
            <person name="Plunkett G. III"/>
            <person name="Bloch C.A."/>
            <person name="Perna N.T."/>
            <person name="Burland V."/>
            <person name="Riley M."/>
            <person name="Collado-Vides J."/>
            <person name="Glasner J.D."/>
            <person name="Rode C.K."/>
            <person name="Mayhew G.F."/>
            <person name="Gregor J."/>
            <person name="Davis N.W."/>
            <person name="Kirkpatrick H.A."/>
            <person name="Goeden M.A."/>
            <person name="Rose D.J."/>
            <person name="Mau B."/>
            <person name="Shao Y."/>
        </authorList>
    </citation>
    <scope>NUCLEOTIDE SEQUENCE [LARGE SCALE GENOMIC DNA]</scope>
    <source>
        <strain>K12 / MG1655 / ATCC 47076</strain>
    </source>
</reference>
<reference key="4">
    <citation type="journal article" date="2006" name="Mol. Syst. Biol.">
        <title>Highly accurate genome sequences of Escherichia coli K-12 strains MG1655 and W3110.</title>
        <authorList>
            <person name="Hayashi K."/>
            <person name="Morooka N."/>
            <person name="Yamamoto Y."/>
            <person name="Fujita K."/>
            <person name="Isono K."/>
            <person name="Choi S."/>
            <person name="Ohtsubo E."/>
            <person name="Baba T."/>
            <person name="Wanner B.L."/>
            <person name="Mori H."/>
            <person name="Horiuchi T."/>
        </authorList>
    </citation>
    <scope>NUCLEOTIDE SEQUENCE [LARGE SCALE GENOMIC DNA]</scope>
    <source>
        <strain>K12 / W3110 / ATCC 27325 / DSM 5911</strain>
    </source>
</reference>
<reference key="5">
    <citation type="journal article" date="1996" name="DNA Res.">
        <title>A 460-kb DNA sequence of the Escherichia coli K-12 genome corresponding to the 40.1-50.0 min region on the linkage map.</title>
        <authorList>
            <person name="Itoh T."/>
            <person name="Aiba H."/>
            <person name="Baba T."/>
            <person name="Fujita K."/>
            <person name="Hayashi K."/>
            <person name="Inada T."/>
            <person name="Isono K."/>
            <person name="Kasai H."/>
            <person name="Kimura S."/>
            <person name="Kitakawa M."/>
            <person name="Kitagawa M."/>
            <person name="Makino K."/>
            <person name="Miki T."/>
            <person name="Mizobuchi K."/>
            <person name="Mori H."/>
            <person name="Mori T."/>
            <person name="Motomura K."/>
            <person name="Nakade S."/>
            <person name="Nakamura Y."/>
            <person name="Nashimoto H."/>
            <person name="Nishio Y."/>
            <person name="Oshima T."/>
            <person name="Saito N."/>
            <person name="Sampei G."/>
            <person name="Seki Y."/>
            <person name="Sivasundaram S."/>
            <person name="Tagami H."/>
            <person name="Takeda J."/>
            <person name="Takemoto K."/>
            <person name="Wada C."/>
            <person name="Yamamoto Y."/>
            <person name="Horiuchi T."/>
        </authorList>
    </citation>
    <scope>NUCLEOTIDE SEQUENCE [LARGE SCALE GENOMIC DNA] OF 1-757</scope>
    <source>
        <strain>K12 / W3110 / ATCC 27325 / DSM 5911</strain>
    </source>
</reference>
<reference key="6">
    <citation type="journal article" date="1999" name="FEMS Microbiol. Lett.">
        <title>The periplasmic nitrate reductase from Escherichia coli: a heterodimeric molybdoprotein with a double-arginine signal sequence and an unusual leader peptide cleavage site.</title>
        <authorList>
            <person name="Thomas G."/>
            <person name="Potter L."/>
            <person name="Cole J.A."/>
        </authorList>
    </citation>
    <scope>PROTEIN SEQUENCE OF 37-43</scope>
    <scope>SUBCELLULAR LOCATION</scope>
    <scope>SUBUNIT</scope>
    <source>
        <strain>K12</strain>
    </source>
</reference>
<reference key="7">
    <citation type="journal article" date="2006" name="Microbiology">
        <title>The NapF protein of the Escherichia coli periplasmic nitrate reductase system: demonstration of a cytoplasmic location and interaction with the catalytic subunit, NapA.</title>
        <authorList>
            <person name="Nilavongse A."/>
            <person name="Brondijk T.H."/>
            <person name="Overton T.W."/>
            <person name="Richardson D.J."/>
            <person name="Leach E.R."/>
            <person name="Cole J.A."/>
        </authorList>
    </citation>
    <scope>INTERACTION WITH NAPD AND NAPF</scope>
    <source>
        <strain>K12</strain>
    </source>
</reference>
<reference key="8">
    <citation type="journal article" date="2007" name="J. Biol. Chem.">
        <title>Export pathway selectivity of Escherichia coli twin arginine translocation signal peptides.</title>
        <authorList>
            <person name="Tullman-Ercek D."/>
            <person name="DeLisa M.P."/>
            <person name="Kawarasaki Y."/>
            <person name="Iranpour P."/>
            <person name="Ribnicky B."/>
            <person name="Palmer T."/>
            <person name="Georgiou G."/>
        </authorList>
    </citation>
    <scope>EXPORT VIA THE TAT-SYSTEM</scope>
</reference>
<reference key="9">
    <citation type="journal article" date="2007" name="Proc. Natl. Acad. Sci. U.S.A.">
        <title>Structural diversity in twin-arginine signal peptide-binding proteins.</title>
        <authorList>
            <person name="Maillard J."/>
            <person name="Spronk C.A."/>
            <person name="Buchanan G."/>
            <person name="Lyall V."/>
            <person name="Richardson D.J."/>
            <person name="Palmer T."/>
            <person name="Vuister G.W."/>
            <person name="Sargent F."/>
        </authorList>
    </citation>
    <scope>ACTIVITY REGULATION</scope>
    <scope>INTERACTION WITH NAPD</scope>
</reference>
<reference key="10">
    <citation type="journal article" date="2012" name="Mol. Microbiol.">
        <title>Overlapping transport and chaperone-binding functions within a bacterial twin-arginine signal peptide.</title>
        <authorList>
            <person name="Grahl S."/>
            <person name="Maillard J."/>
            <person name="Spronk C.A."/>
            <person name="Vuister G.W."/>
            <person name="Sargent F."/>
        </authorList>
    </citation>
    <scope>INTERACTION WITH NAPD</scope>
    <scope>MUTAGENESIS OF ARG-6; LYS-10 AND ALA-17</scope>
</reference>
<reference key="11">
    <citation type="journal article" date="2014" name="FEBS J.">
        <title>Characterization of a periplasmic nitrate reductase in complex with its biosynthetic chaperone.</title>
        <authorList>
            <person name="Dow J.M."/>
            <person name="Grahl S."/>
            <person name="Ward R."/>
            <person name="Evans R."/>
            <person name="Byron O."/>
            <person name="Norman D.G."/>
            <person name="Palmer T."/>
            <person name="Sargent F."/>
        </authorList>
    </citation>
    <scope>INTERACTION WITH NAPD</scope>
    <scope>DOMAIN</scope>
</reference>
<reference key="12">
    <citation type="journal article" date="2007" name="J. Biol. Chem.">
        <title>Spectropotentiometric and structural analysis of the periplasmic nitrate reductase from Escherichia coli.</title>
        <authorList>
            <person name="Jepson B.J."/>
            <person name="Mohan S."/>
            <person name="Clarke T.A."/>
            <person name="Gates A.J."/>
            <person name="Cole J.A."/>
            <person name="Butler C.S."/>
            <person name="Butt J.N."/>
            <person name="Hemmings A.M."/>
            <person name="Richardson D.J."/>
        </authorList>
    </citation>
    <scope>X-RAY CRYSTALLOGRAPHY (2.50 ANGSTROMS) OF 37-828 IN COMPLEX WITH IRON-SULFUR (4FE-4S) AND MOLYBDENUM MOLYBDOPTERIN COFACTOR</scope>
    <scope>FUNCTION</scope>
    <scope>CATALYTIC ACTIVITY</scope>
    <scope>COFACTOR</scope>
    <scope>INTERACTION WITH NAPB</scope>
</reference>
<reference key="13">
    <citation type="submission" date="2007-05" db="PDB data bank">
        <title>Solution structure of NapD, a private chaperone of periplasmic nitrate reductase NapA/B, in complex with NapA1-35 signal peptide.</title>
        <authorList>
            <person name="Minailiuc O.M."/>
            <person name="Ekiel I."/>
            <person name="Cheng J."/>
            <person name="Milad M."/>
            <person name="Gandhi S."/>
            <person name="Larocque R."/>
            <person name="Cygler M."/>
            <person name="Matte A."/>
        </authorList>
    </citation>
    <scope>STRUCTURE BY NMR OF 1-35 IN COMPLEX WITH NAPD</scope>
</reference>
<sequence>MKLSRRSFMKANAVAAAAAAAGLSVPGVARAVVGQQEAIKWDKAPCRFCGTGCGVLVGTQQGRVVACQGDPDAPVNRGLNCIKGYFLPKIMYGKDRLTQPLLRMKNGKYDKEGEFTPITWDQAFDVMEEKFKTALKEKGPESIGMFGSGQWTIWEGYAASKLFKAGFRSNNIDPNARHCMASAVVGFMRTFGMDEPMGCYDDIEQADAFVLWGANMAEMHPILWSRITNRRLSNQNVTVAVLSTYQHRSFELADNGIIFTPQSDLVILNYIANYIIQNNAINQDFFSKHVNLRKGATDIGYGLRPTHPLEKAAKNPGSDASEPMSFEDYKAFVAEYTLEKTAEMTGVPKDQLEQLAQLYADPNKKVISYWTMGFNQHTRGVWANNLVYNLHLLTGKISQPGCGPFSLTGQPSACGTAREVGTFAHRLPADMVVTNEKHRDICEKKWNIPSGTIPAKIGLHAVAQDRALKDGKLNVYWTMCTNNMQAGPNINEERMPGWRDPRNFIIVSDPYPTVSALAADLILPTAMWVEKEGAYGNAERRTQFWRQQVQAPGEAKSDLWQLVQFSRRFKTEEVWPEDLLAKKPELRGKTLYEVLYATPEVSKFPVSELAEDQLNDESRELGFYLQKGLFEEYAWFGRGHGHDLAPFDDYHKARGLRWPVVNGKETQWRYSEGNDPYVKAGEGYKFYGKPDGKAVIFALPFEPAAEAPDEEYDLWLSTGRVLEHWHTGSMTRRVPELHRAFPEAVLFIHPLDAKARDLRRGDKVKVVSRRGEVISIVETRGRNRPPQGLVYMPFFDAAQLVNKLTLDATDPLSKETDFKKCAVKLEKV</sequence>
<protein>
    <recommendedName>
        <fullName evidence="2 11">Periplasmic nitrate reductase</fullName>
        <ecNumber evidence="2 5">1.9.6.1</ecNumber>
    </recommendedName>
</protein>
<gene>
    <name evidence="2" type="primary">napA</name>
    <name type="synonym">yojC</name>
    <name type="synonym">yojD</name>
    <name type="synonym">yojE</name>
    <name type="ordered locus">b2206</name>
    <name type="ordered locus">JW2194</name>
</gene>
<name>NAPA_ECOLI</name>
<evidence type="ECO:0000250" key="1">
    <source>
        <dbReference type="UniProtKB" id="P81186"/>
    </source>
</evidence>
<evidence type="ECO:0000255" key="2">
    <source>
        <dbReference type="HAMAP-Rule" id="MF_01630"/>
    </source>
</evidence>
<evidence type="ECO:0000269" key="3">
    <source>
    </source>
</evidence>
<evidence type="ECO:0000269" key="4">
    <source>
    </source>
</evidence>
<evidence type="ECO:0000269" key="5">
    <source>
    </source>
</evidence>
<evidence type="ECO:0000269" key="6">
    <source>
    </source>
</evidence>
<evidence type="ECO:0000269" key="7">
    <source>
    </source>
</evidence>
<evidence type="ECO:0000269" key="8">
    <source>
    </source>
</evidence>
<evidence type="ECO:0000269" key="9">
    <source>
    </source>
</evidence>
<evidence type="ECO:0000269" key="10">
    <source ref="13"/>
</evidence>
<evidence type="ECO:0000305" key="11"/>
<evidence type="ECO:0007744" key="12">
    <source>
        <dbReference type="PDB" id="2NYA"/>
    </source>
</evidence>
<evidence type="ECO:0007829" key="13">
    <source>
        <dbReference type="PDB" id="2NYA"/>
    </source>
</evidence>
<evidence type="ECO:0007829" key="14">
    <source>
        <dbReference type="PDB" id="2PQ4"/>
    </source>
</evidence>